<feature type="chain" id="PRO_0000225505" description="DNA-directed RNA polymerase subunit beta'">
    <location>
        <begin position="1"/>
        <end position="1415"/>
    </location>
</feature>
<feature type="binding site" evidence="1">
    <location>
        <position position="69"/>
    </location>
    <ligand>
        <name>Zn(2+)</name>
        <dbReference type="ChEBI" id="CHEBI:29105"/>
        <label>1</label>
    </ligand>
</feature>
<feature type="binding site" evidence="1">
    <location>
        <position position="71"/>
    </location>
    <ligand>
        <name>Zn(2+)</name>
        <dbReference type="ChEBI" id="CHEBI:29105"/>
        <label>1</label>
    </ligand>
</feature>
<feature type="binding site" evidence="1">
    <location>
        <position position="84"/>
    </location>
    <ligand>
        <name>Zn(2+)</name>
        <dbReference type="ChEBI" id="CHEBI:29105"/>
        <label>1</label>
    </ligand>
</feature>
<feature type="binding site" evidence="1">
    <location>
        <position position="87"/>
    </location>
    <ligand>
        <name>Zn(2+)</name>
        <dbReference type="ChEBI" id="CHEBI:29105"/>
        <label>1</label>
    </ligand>
</feature>
<feature type="binding site" evidence="1">
    <location>
        <position position="461"/>
    </location>
    <ligand>
        <name>Mg(2+)</name>
        <dbReference type="ChEBI" id="CHEBI:18420"/>
    </ligand>
</feature>
<feature type="binding site" evidence="1">
    <location>
        <position position="463"/>
    </location>
    <ligand>
        <name>Mg(2+)</name>
        <dbReference type="ChEBI" id="CHEBI:18420"/>
    </ligand>
</feature>
<feature type="binding site" evidence="1">
    <location>
        <position position="465"/>
    </location>
    <ligand>
        <name>Mg(2+)</name>
        <dbReference type="ChEBI" id="CHEBI:18420"/>
    </ligand>
</feature>
<feature type="binding site" evidence="1">
    <location>
        <position position="805"/>
    </location>
    <ligand>
        <name>Zn(2+)</name>
        <dbReference type="ChEBI" id="CHEBI:29105"/>
        <label>2</label>
    </ligand>
</feature>
<feature type="binding site" evidence="1">
    <location>
        <position position="879"/>
    </location>
    <ligand>
        <name>Zn(2+)</name>
        <dbReference type="ChEBI" id="CHEBI:29105"/>
        <label>2</label>
    </ligand>
</feature>
<feature type="binding site" evidence="1">
    <location>
        <position position="886"/>
    </location>
    <ligand>
        <name>Zn(2+)</name>
        <dbReference type="ChEBI" id="CHEBI:29105"/>
        <label>2</label>
    </ligand>
</feature>
<feature type="binding site" evidence="1">
    <location>
        <position position="889"/>
    </location>
    <ligand>
        <name>Zn(2+)</name>
        <dbReference type="ChEBI" id="CHEBI:29105"/>
        <label>2</label>
    </ligand>
</feature>
<protein>
    <recommendedName>
        <fullName evidence="1">DNA-directed RNA polymerase subunit beta'</fullName>
        <shortName evidence="1">RNAP subunit beta'</shortName>
        <ecNumber evidence="1">2.7.7.6</ecNumber>
    </recommendedName>
    <alternativeName>
        <fullName evidence="1">RNA polymerase subunit beta'</fullName>
    </alternativeName>
    <alternativeName>
        <fullName evidence="1">Transcriptase subunit beta'</fullName>
    </alternativeName>
</protein>
<keyword id="KW-0240">DNA-directed RNA polymerase</keyword>
<keyword id="KW-0460">Magnesium</keyword>
<keyword id="KW-0479">Metal-binding</keyword>
<keyword id="KW-0548">Nucleotidyltransferase</keyword>
<keyword id="KW-0804">Transcription</keyword>
<keyword id="KW-0808">Transferase</keyword>
<keyword id="KW-0862">Zinc</keyword>
<evidence type="ECO:0000255" key="1">
    <source>
        <dbReference type="HAMAP-Rule" id="MF_01322"/>
    </source>
</evidence>
<sequence length="1415" mass="156718">MKMLDLYGYTSIAQSFDKICISIASPESIRAMSYGEIKDISTTNYRTFKVEKGGLFCPKIFGPVNDDECLCGKYRKKRYRGIVCEKCGVEVTSSKVRRERMGHIELVSPVAHVWFLKSLPSRIGALLDMPMKSIESILYSGDFVVIDPMTTPFSKGEVISESVYNQARDAYGDEGFIALTGAEAIRELLVRLDLGAIRAGLRSELESTSSEMKRKKVVKRLRIIENFIASGNRPEWMILTVIPVLPPDLRPLVSLENGRPAVSDLNHHYRTIINRNNRLEKLLKLNPPAIMIRNEKRMLQEAVDGLFDSSRRSYVSSRAGSMGYKKSLSDMLKGKQGRFRQNLLGKRVDYSGRSVIVVGPGLKLHQCGLPKKMALELFKPFICSKLKMYGVAPTVKLANKMIQSEKPEVWDVLDEVIREHPILLNRAPTLHRLGLQAFDPVLIEGKAIQLHPLVCSAFNADFDGDQMAVHVPLSLEAQLEARVLMMSTNNILSPSNGRPIIVPSKDIVLGIYYLTLQRAQAPDQEVMSFGELSHVEYALHEGIVHTSSKIKYRMQRCNSDGTIVSEVVETTPGRLILWQIFPQHKDLTFDLVNQVLTVKEITSIVDLVYRSCGQRETVEFSDKLMCLGFQYASQSGISFGCKDMIIPDTKAAHVENASEKIKEFSIQYQDGLITRSERYNKVVDEWSKCTDLIARDMMKAISLSDEEGKLNSIYMMANSGARGSASQMKQLAGMRGLMAKPSGEIIETPIISNFREGLSVFEYFNSTHGARKGLADTALKTANSGYLTRRLVDVAQDCTVVEYDCKTKDGVVARAVIEGGAVVATLDSVVLGRVAAVDTYNPVTEELLLSAGELIDEGKVEKIRVAGLDAVRVRSPLTCESKKGICSLCYGRDLAVGDLVSIGEAVGVIAAQSVGEPGTQLTMRTFHVGGTAMRGVEVSNLIAVLDAEVKLVNSNVVTDKYGNQIVMSRSCEVVLLDSVGNEKMRHSVPYGAKLYVSDGQPVKMMDKMAEWDPYTIPIITEKTGTIKYVDLIYGVSINEVLDESTGISNRVVIDWKLHLQGANLRPRLVLLDEDGNIATLYNDLEASYFVPIGAVLNVQDGQKVHAGDVITRIPRESIKTRDITGGLPRVIELFEARRPKEHAIVSDVDGYVEFGKDYYRSKRRIFIRPVDKSLPAVEYLVPKGKHTIVNEGDFVHKGDLLMDGDPDQHDILRVLGAEALASYMISEIQQVYRLQGVRIDNKHIEVILRQMLQKVEITDPGDTMYLVGEHAGREEVMRLNRKLEEAGKKPVAYVPILQGITKASLDTNSFISAASFQETTKVLTEAAFSGKEDPLYGLKENVIVGRLIPAGTGFIMNKVKKLAMLDQSDYATYYNSELREIMGDLGDELIAEGEAASPGRSGDGYLGNGGGVVDY</sequence>
<name>RPOC_ANAMM</name>
<comment type="function">
    <text evidence="1">DNA-dependent RNA polymerase catalyzes the transcription of DNA into RNA using the four ribonucleoside triphosphates as substrates.</text>
</comment>
<comment type="catalytic activity">
    <reaction evidence="1">
        <text>RNA(n) + a ribonucleoside 5'-triphosphate = RNA(n+1) + diphosphate</text>
        <dbReference type="Rhea" id="RHEA:21248"/>
        <dbReference type="Rhea" id="RHEA-COMP:14527"/>
        <dbReference type="Rhea" id="RHEA-COMP:17342"/>
        <dbReference type="ChEBI" id="CHEBI:33019"/>
        <dbReference type="ChEBI" id="CHEBI:61557"/>
        <dbReference type="ChEBI" id="CHEBI:140395"/>
        <dbReference type="EC" id="2.7.7.6"/>
    </reaction>
</comment>
<comment type="cofactor">
    <cofactor evidence="1">
        <name>Mg(2+)</name>
        <dbReference type="ChEBI" id="CHEBI:18420"/>
    </cofactor>
    <text evidence="1">Binds 1 Mg(2+) ion per subunit.</text>
</comment>
<comment type="cofactor">
    <cofactor evidence="1">
        <name>Zn(2+)</name>
        <dbReference type="ChEBI" id="CHEBI:29105"/>
    </cofactor>
    <text evidence="1">Binds 2 Zn(2+) ions per subunit.</text>
</comment>
<comment type="subunit">
    <text evidence="1">The RNAP catalytic core consists of 2 alpha, 1 beta, 1 beta' and 1 omega subunit. When a sigma factor is associated with the core the holoenzyme is formed, which can initiate transcription.</text>
</comment>
<comment type="similarity">
    <text evidence="1">Belongs to the RNA polymerase beta' chain family.</text>
</comment>
<dbReference type="EC" id="2.7.7.6" evidence="1"/>
<dbReference type="EMBL" id="CP000030">
    <property type="protein sequence ID" value="AAV86366.1"/>
    <property type="molecule type" value="Genomic_DNA"/>
</dbReference>
<dbReference type="RefSeq" id="WP_010263106.1">
    <property type="nucleotide sequence ID" value="NZ_AFMU01000046.1"/>
</dbReference>
<dbReference type="SMR" id="Q5PBG3"/>
<dbReference type="GeneID" id="7398649"/>
<dbReference type="KEGG" id="ama:AM263"/>
<dbReference type="PATRIC" id="fig|320483.3.peg.222"/>
<dbReference type="HOGENOM" id="CLU_000524_3_1_5"/>
<dbReference type="GO" id="GO:0000428">
    <property type="term" value="C:DNA-directed RNA polymerase complex"/>
    <property type="evidence" value="ECO:0007669"/>
    <property type="project" value="UniProtKB-KW"/>
</dbReference>
<dbReference type="GO" id="GO:0003677">
    <property type="term" value="F:DNA binding"/>
    <property type="evidence" value="ECO:0007669"/>
    <property type="project" value="UniProtKB-UniRule"/>
</dbReference>
<dbReference type="GO" id="GO:0003899">
    <property type="term" value="F:DNA-directed RNA polymerase activity"/>
    <property type="evidence" value="ECO:0007669"/>
    <property type="project" value="UniProtKB-UniRule"/>
</dbReference>
<dbReference type="GO" id="GO:0000287">
    <property type="term" value="F:magnesium ion binding"/>
    <property type="evidence" value="ECO:0007669"/>
    <property type="project" value="UniProtKB-UniRule"/>
</dbReference>
<dbReference type="GO" id="GO:0008270">
    <property type="term" value="F:zinc ion binding"/>
    <property type="evidence" value="ECO:0007669"/>
    <property type="project" value="UniProtKB-UniRule"/>
</dbReference>
<dbReference type="GO" id="GO:0006351">
    <property type="term" value="P:DNA-templated transcription"/>
    <property type="evidence" value="ECO:0007669"/>
    <property type="project" value="UniProtKB-UniRule"/>
</dbReference>
<dbReference type="CDD" id="cd02655">
    <property type="entry name" value="RNAP_beta'_C"/>
    <property type="match status" value="1"/>
</dbReference>
<dbReference type="CDD" id="cd01609">
    <property type="entry name" value="RNAP_beta'_N"/>
    <property type="match status" value="1"/>
</dbReference>
<dbReference type="Gene3D" id="1.10.132.30">
    <property type="match status" value="1"/>
</dbReference>
<dbReference type="Gene3D" id="1.10.150.390">
    <property type="match status" value="1"/>
</dbReference>
<dbReference type="Gene3D" id="1.10.1790.20">
    <property type="match status" value="1"/>
</dbReference>
<dbReference type="Gene3D" id="1.10.40.90">
    <property type="match status" value="1"/>
</dbReference>
<dbReference type="Gene3D" id="2.40.40.20">
    <property type="match status" value="1"/>
</dbReference>
<dbReference type="Gene3D" id="2.40.50.100">
    <property type="match status" value="3"/>
</dbReference>
<dbReference type="Gene3D" id="4.10.860.120">
    <property type="entry name" value="RNA polymerase II, clamp domain"/>
    <property type="match status" value="1"/>
</dbReference>
<dbReference type="Gene3D" id="1.10.274.100">
    <property type="entry name" value="RNA polymerase Rpb1, domain 3"/>
    <property type="match status" value="2"/>
</dbReference>
<dbReference type="HAMAP" id="MF_01322">
    <property type="entry name" value="RNApol_bact_RpoC"/>
    <property type="match status" value="1"/>
</dbReference>
<dbReference type="InterPro" id="IPR045867">
    <property type="entry name" value="DNA-dir_RpoC_beta_prime"/>
</dbReference>
<dbReference type="InterPro" id="IPR012754">
    <property type="entry name" value="DNA-dir_RpoC_beta_prime_bact"/>
</dbReference>
<dbReference type="InterPro" id="IPR000722">
    <property type="entry name" value="RNA_pol_asu"/>
</dbReference>
<dbReference type="InterPro" id="IPR006592">
    <property type="entry name" value="RNA_pol_N"/>
</dbReference>
<dbReference type="InterPro" id="IPR007080">
    <property type="entry name" value="RNA_pol_Rpb1_1"/>
</dbReference>
<dbReference type="InterPro" id="IPR007066">
    <property type="entry name" value="RNA_pol_Rpb1_3"/>
</dbReference>
<dbReference type="InterPro" id="IPR042102">
    <property type="entry name" value="RNA_pol_Rpb1_3_sf"/>
</dbReference>
<dbReference type="InterPro" id="IPR007083">
    <property type="entry name" value="RNA_pol_Rpb1_4"/>
</dbReference>
<dbReference type="InterPro" id="IPR007081">
    <property type="entry name" value="RNA_pol_Rpb1_5"/>
</dbReference>
<dbReference type="InterPro" id="IPR044893">
    <property type="entry name" value="RNA_pol_Rpb1_clamp_domain"/>
</dbReference>
<dbReference type="InterPro" id="IPR038120">
    <property type="entry name" value="Rpb1_funnel_sf"/>
</dbReference>
<dbReference type="NCBIfam" id="TIGR02386">
    <property type="entry name" value="rpoC_TIGR"/>
    <property type="match status" value="1"/>
</dbReference>
<dbReference type="PANTHER" id="PTHR19376">
    <property type="entry name" value="DNA-DIRECTED RNA POLYMERASE"/>
    <property type="match status" value="1"/>
</dbReference>
<dbReference type="PANTHER" id="PTHR19376:SF54">
    <property type="entry name" value="DNA-DIRECTED RNA POLYMERASE SUBUNIT BETA"/>
    <property type="match status" value="1"/>
</dbReference>
<dbReference type="Pfam" id="PF04997">
    <property type="entry name" value="RNA_pol_Rpb1_1"/>
    <property type="match status" value="1"/>
</dbReference>
<dbReference type="Pfam" id="PF00623">
    <property type="entry name" value="RNA_pol_Rpb1_2"/>
    <property type="match status" value="2"/>
</dbReference>
<dbReference type="Pfam" id="PF04983">
    <property type="entry name" value="RNA_pol_Rpb1_3"/>
    <property type="match status" value="1"/>
</dbReference>
<dbReference type="Pfam" id="PF05000">
    <property type="entry name" value="RNA_pol_Rpb1_4"/>
    <property type="match status" value="1"/>
</dbReference>
<dbReference type="Pfam" id="PF04998">
    <property type="entry name" value="RNA_pol_Rpb1_5"/>
    <property type="match status" value="1"/>
</dbReference>
<dbReference type="SMART" id="SM00663">
    <property type="entry name" value="RPOLA_N"/>
    <property type="match status" value="1"/>
</dbReference>
<dbReference type="SUPFAM" id="SSF64484">
    <property type="entry name" value="beta and beta-prime subunits of DNA dependent RNA-polymerase"/>
    <property type="match status" value="1"/>
</dbReference>
<proteinExistence type="inferred from homology"/>
<accession>Q5PBG3</accession>
<reference key="1">
    <citation type="journal article" date="2005" name="Proc. Natl. Acad. Sci. U.S.A.">
        <title>Complete genome sequencing of Anaplasma marginale reveals that the surface is skewed to two superfamilies of outer membrane proteins.</title>
        <authorList>
            <person name="Brayton K.A."/>
            <person name="Kappmeyer L.S."/>
            <person name="Herndon D.R."/>
            <person name="Dark M.J."/>
            <person name="Tibbals D.L."/>
            <person name="Palmer G.H."/>
            <person name="McGuire T.C."/>
            <person name="Knowles D.P. Jr."/>
        </authorList>
    </citation>
    <scope>NUCLEOTIDE SEQUENCE [LARGE SCALE GENOMIC DNA]</scope>
    <source>
        <strain>St. Maries</strain>
    </source>
</reference>
<organism>
    <name type="scientific">Anaplasma marginale (strain St. Maries)</name>
    <dbReference type="NCBI Taxonomy" id="234826"/>
    <lineage>
        <taxon>Bacteria</taxon>
        <taxon>Pseudomonadati</taxon>
        <taxon>Pseudomonadota</taxon>
        <taxon>Alphaproteobacteria</taxon>
        <taxon>Rickettsiales</taxon>
        <taxon>Anaplasmataceae</taxon>
        <taxon>Anaplasma</taxon>
    </lineage>
</organism>
<gene>
    <name evidence="1" type="primary">rpoC</name>
    <name type="ordered locus">AM263</name>
</gene>